<accession>P41169</accession>
<dbReference type="EMBL" id="M81087">
    <property type="protein sequence ID" value="AAA53126.1"/>
    <property type="molecule type" value="Genomic_DNA"/>
</dbReference>
<dbReference type="SMR" id="P41169"/>
<dbReference type="GO" id="GO:0005886">
    <property type="term" value="C:plasma membrane"/>
    <property type="evidence" value="ECO:0007669"/>
    <property type="project" value="UniProtKB-SubCell"/>
</dbReference>
<dbReference type="GO" id="GO:0045259">
    <property type="term" value="C:proton-transporting ATP synthase complex"/>
    <property type="evidence" value="ECO:0007669"/>
    <property type="project" value="UniProtKB-KW"/>
</dbReference>
<dbReference type="GO" id="GO:0005524">
    <property type="term" value="F:ATP binding"/>
    <property type="evidence" value="ECO:0007669"/>
    <property type="project" value="UniProtKB-UniRule"/>
</dbReference>
<dbReference type="GO" id="GO:0046933">
    <property type="term" value="F:proton-transporting ATP synthase activity, rotational mechanism"/>
    <property type="evidence" value="ECO:0007669"/>
    <property type="project" value="UniProtKB-UniRule"/>
</dbReference>
<dbReference type="GO" id="GO:0042777">
    <property type="term" value="P:proton motive force-driven plasma membrane ATP synthesis"/>
    <property type="evidence" value="ECO:0007669"/>
    <property type="project" value="UniProtKB-UniRule"/>
</dbReference>
<dbReference type="CDD" id="cd12151">
    <property type="entry name" value="F1-ATPase_gamma"/>
    <property type="match status" value="1"/>
</dbReference>
<dbReference type="FunFam" id="1.10.287.80:FF:000005">
    <property type="entry name" value="ATP synthase gamma chain"/>
    <property type="match status" value="1"/>
</dbReference>
<dbReference type="Gene3D" id="3.40.1380.10">
    <property type="match status" value="1"/>
</dbReference>
<dbReference type="Gene3D" id="1.10.287.80">
    <property type="entry name" value="ATP synthase, gamma subunit, helix hairpin domain"/>
    <property type="match status" value="1"/>
</dbReference>
<dbReference type="HAMAP" id="MF_00815">
    <property type="entry name" value="ATP_synth_gamma_bact"/>
    <property type="match status" value="1"/>
</dbReference>
<dbReference type="InterPro" id="IPR035968">
    <property type="entry name" value="ATP_synth_F1_ATPase_gsu"/>
</dbReference>
<dbReference type="InterPro" id="IPR000131">
    <property type="entry name" value="ATP_synth_F1_gsu"/>
</dbReference>
<dbReference type="InterPro" id="IPR023632">
    <property type="entry name" value="ATP_synth_F1_gsu_CS"/>
</dbReference>
<dbReference type="NCBIfam" id="TIGR01146">
    <property type="entry name" value="ATPsyn_F1gamma"/>
    <property type="match status" value="1"/>
</dbReference>
<dbReference type="NCBIfam" id="NF004144">
    <property type="entry name" value="PRK05621.1-1"/>
    <property type="match status" value="1"/>
</dbReference>
<dbReference type="PANTHER" id="PTHR11693">
    <property type="entry name" value="ATP SYNTHASE GAMMA CHAIN"/>
    <property type="match status" value="1"/>
</dbReference>
<dbReference type="PANTHER" id="PTHR11693:SF22">
    <property type="entry name" value="ATP SYNTHASE SUBUNIT GAMMA, MITOCHONDRIAL"/>
    <property type="match status" value="1"/>
</dbReference>
<dbReference type="Pfam" id="PF00231">
    <property type="entry name" value="ATP-synt"/>
    <property type="match status" value="1"/>
</dbReference>
<dbReference type="PRINTS" id="PR00126">
    <property type="entry name" value="ATPASEGAMMA"/>
</dbReference>
<dbReference type="SUPFAM" id="SSF52943">
    <property type="entry name" value="ATP synthase (F1-ATPase), gamma subunit"/>
    <property type="match status" value="1"/>
</dbReference>
<dbReference type="PROSITE" id="PS00153">
    <property type="entry name" value="ATPASE_GAMMA"/>
    <property type="match status" value="1"/>
</dbReference>
<feature type="chain" id="PRO_0000073408" description="ATP synthase gamma chain">
    <location>
        <begin position="1"/>
        <end position="298"/>
    </location>
</feature>
<organism>
    <name type="scientific">Acidithiobacillus ferridurans</name>
    <dbReference type="NCBI Taxonomy" id="1232575"/>
    <lineage>
        <taxon>Bacteria</taxon>
        <taxon>Pseudomonadati</taxon>
        <taxon>Pseudomonadota</taxon>
        <taxon>Acidithiobacillia</taxon>
        <taxon>Acidithiobacillales</taxon>
        <taxon>Acidithiobacillaceae</taxon>
        <taxon>Acidithiobacillus</taxon>
    </lineage>
</organism>
<name>ATPG_ACIFI</name>
<reference key="1">
    <citation type="journal article" date="1994" name="FEMS Microbiol. Lett.">
        <title>The F1 genes of the F1F0 ATP synthase from the acidophilic bacterium Thiobacillus ferrooxidans complement Escherichia coli F1 unc mutants.</title>
        <authorList>
            <person name="Brown L.D."/>
            <person name="Dennehy M.E."/>
            <person name="Rawlings D.E."/>
        </authorList>
    </citation>
    <scope>NUCLEOTIDE SEQUENCE [GENOMIC DNA]</scope>
    <source>
        <strain>ATCC 33020 / DSM 29468 / JCM 18981 / 11Fe</strain>
    </source>
</reference>
<comment type="function">
    <text evidence="1">Produces ATP from ADP in the presence of a proton gradient across the membrane. The gamma chain is believed to be important in regulating ATPase activity and the flow of protons through the CF(0) complex.</text>
</comment>
<comment type="subunit">
    <text evidence="1">F-type ATPases have 2 components, CF(1) - the catalytic core - and CF(0) - the membrane proton channel. CF(1) has five subunits: alpha(3), beta(3), gamma(1), delta(1), epsilon(1). CF(0) has three main subunits: a, b and c.</text>
</comment>
<comment type="subcellular location">
    <subcellularLocation>
        <location evidence="1">Cell inner membrane</location>
        <topology evidence="1">Peripheral membrane protein</topology>
    </subcellularLocation>
</comment>
<comment type="similarity">
    <text evidence="1">Belongs to the ATPase gamma chain family.</text>
</comment>
<sequence>MANAKEIRGQIKSVKNTRKITRAMEMVAASKMRRAQERMRAARPCAEKIREVLGHLAQAHPEYEHPLMQVRPVKKAGFLVVTTDRGLCGGLNVNVLRNVVQKMRELHEEGVESNLAVVGNKGLGFLRRHGAHLVADVNGLGDSPHLGDMIGPIRAMADAYAKGEVDVVYLVSSRFVNTMLQRATVEQLLPVEKPTASAEQRAELWDYIYEPEARPVLDRLMQRYVESVVYQAVIEHLACEQSARMVAMKSASDNAKRMVDDLQLAYNKARQAAITQEIAEISAGAARFDDCAQHFWKF</sequence>
<proteinExistence type="inferred from homology"/>
<gene>
    <name evidence="1" type="primary">atpG</name>
</gene>
<keyword id="KW-0066">ATP synthesis</keyword>
<keyword id="KW-0997">Cell inner membrane</keyword>
<keyword id="KW-1003">Cell membrane</keyword>
<keyword id="KW-0139">CF(1)</keyword>
<keyword id="KW-0375">Hydrogen ion transport</keyword>
<keyword id="KW-0406">Ion transport</keyword>
<keyword id="KW-0472">Membrane</keyword>
<keyword id="KW-0813">Transport</keyword>
<protein>
    <recommendedName>
        <fullName evidence="1">ATP synthase gamma chain</fullName>
    </recommendedName>
    <alternativeName>
        <fullName evidence="1">ATP synthase F1 sector gamma subunit</fullName>
    </alternativeName>
    <alternativeName>
        <fullName evidence="1">F-ATPase gamma subunit</fullName>
    </alternativeName>
</protein>
<evidence type="ECO:0000255" key="1">
    <source>
        <dbReference type="HAMAP-Rule" id="MF_00815"/>
    </source>
</evidence>